<keyword id="KW-0134">Cell wall</keyword>
<keyword id="KW-0903">Direct protein sequencing</keyword>
<keyword id="KW-0964">Secreted</keyword>
<dbReference type="GO" id="GO:0005576">
    <property type="term" value="C:extracellular region"/>
    <property type="evidence" value="ECO:0007669"/>
    <property type="project" value="UniProtKB-KW"/>
</dbReference>
<comment type="subcellular location">
    <subcellularLocation>
        <location evidence="1">Secreted</location>
        <location evidence="1">Cell wall</location>
    </subcellularLocation>
</comment>
<evidence type="ECO:0000269" key="1">
    <source>
    </source>
</evidence>
<evidence type="ECO:0000303" key="2">
    <source>
    </source>
</evidence>
<evidence type="ECO:0000305" key="3"/>
<reference evidence="3" key="1">
    <citation type="journal article" date="2009" name="J. Plant Physiol.">
        <title>Analysis of the soluble cell wall proteome of gymnosperms.</title>
        <authorList>
            <person name="Uzal E.N."/>
            <person name="Gomez-Ros L.V."/>
            <person name="Hernandez J.A."/>
            <person name="Pedreno M.A."/>
            <person name="Cuello J."/>
            <person name="Ros Barcelo A."/>
        </authorList>
    </citation>
    <scope>PROTEIN SEQUENCE</scope>
    <scope>SUBCELLULAR LOCATION</scope>
    <source>
        <strain evidence="1">PC-61</strain>
        <tissue evidence="1">Callus</tissue>
    </source>
</reference>
<feature type="chain" id="PRO_0000326451" description="Unknown protein 1">
    <location>
        <begin position="1" status="less than"/>
        <end position="13" status="greater than"/>
    </location>
</feature>
<feature type="unsure residue" description="L or I" evidence="1">
    <location>
        <position position="4"/>
    </location>
</feature>
<feature type="unsure residue" description="L or I" evidence="1">
    <location>
        <position position="11"/>
    </location>
</feature>
<feature type="unsure residue" description="K or Q" evidence="1">
    <location>
        <position position="13"/>
    </location>
</feature>
<feature type="non-terminal residue" evidence="2">
    <location>
        <position position="1"/>
    </location>
</feature>
<feature type="non-terminal residue" evidence="2">
    <location>
        <position position="13"/>
    </location>
</feature>
<accession>P85493</accession>
<organism>
    <name type="scientific">Ephedra distachya</name>
    <name type="common">Joint-fir</name>
    <name type="synonym">Ephedra vulgaris</name>
    <dbReference type="NCBI Taxonomy" id="3389"/>
    <lineage>
        <taxon>Eukaryota</taxon>
        <taxon>Viridiplantae</taxon>
        <taxon>Streptophyta</taxon>
        <taxon>Embryophyta</taxon>
        <taxon>Tracheophyta</taxon>
        <taxon>Spermatophyta</taxon>
        <taxon>Gnetopsida</taxon>
        <taxon>Gnetidae</taxon>
        <taxon>Ephedrales</taxon>
        <taxon>Ephedraceae</taxon>
        <taxon>Ephedra</taxon>
    </lineage>
</organism>
<name>UP01_EPHDI</name>
<protein>
    <recommendedName>
        <fullName>Unknown protein 1</fullName>
    </recommendedName>
</protein>
<proteinExistence type="evidence at protein level"/>
<sequence length="13" mass="1387">NPVLPCPVGSLYK</sequence>